<gene>
    <name evidence="1" type="primary">hisD</name>
    <name type="ordered locus">bbp_094</name>
</gene>
<dbReference type="EC" id="1.1.1.23" evidence="1"/>
<dbReference type="EMBL" id="AE016826">
    <property type="protein sequence ID" value="AAO26829.1"/>
    <property type="molecule type" value="Genomic_DNA"/>
</dbReference>
<dbReference type="RefSeq" id="WP_011091230.1">
    <property type="nucleotide sequence ID" value="NC_004545.1"/>
</dbReference>
<dbReference type="SMR" id="P59398"/>
<dbReference type="STRING" id="224915.bbp_094"/>
<dbReference type="KEGG" id="bab:bbp_094"/>
<dbReference type="eggNOG" id="COG0141">
    <property type="taxonomic scope" value="Bacteria"/>
</dbReference>
<dbReference type="HOGENOM" id="CLU_006732_3_0_6"/>
<dbReference type="OrthoDB" id="9805269at2"/>
<dbReference type="UniPathway" id="UPA00031">
    <property type="reaction ID" value="UER00014"/>
</dbReference>
<dbReference type="Proteomes" id="UP000000601">
    <property type="component" value="Chromosome"/>
</dbReference>
<dbReference type="GO" id="GO:0005829">
    <property type="term" value="C:cytosol"/>
    <property type="evidence" value="ECO:0007669"/>
    <property type="project" value="TreeGrafter"/>
</dbReference>
<dbReference type="GO" id="GO:0004399">
    <property type="term" value="F:histidinol dehydrogenase activity"/>
    <property type="evidence" value="ECO:0007669"/>
    <property type="project" value="UniProtKB-UniRule"/>
</dbReference>
<dbReference type="GO" id="GO:0051287">
    <property type="term" value="F:NAD binding"/>
    <property type="evidence" value="ECO:0007669"/>
    <property type="project" value="InterPro"/>
</dbReference>
<dbReference type="GO" id="GO:0008270">
    <property type="term" value="F:zinc ion binding"/>
    <property type="evidence" value="ECO:0007669"/>
    <property type="project" value="UniProtKB-UniRule"/>
</dbReference>
<dbReference type="GO" id="GO:0000105">
    <property type="term" value="P:L-histidine biosynthetic process"/>
    <property type="evidence" value="ECO:0007669"/>
    <property type="project" value="UniProtKB-UniRule"/>
</dbReference>
<dbReference type="CDD" id="cd06572">
    <property type="entry name" value="Histidinol_dh"/>
    <property type="match status" value="1"/>
</dbReference>
<dbReference type="FunFam" id="3.40.50.1980:FF:000001">
    <property type="entry name" value="Histidinol dehydrogenase"/>
    <property type="match status" value="1"/>
</dbReference>
<dbReference type="Gene3D" id="1.20.5.1300">
    <property type="match status" value="1"/>
</dbReference>
<dbReference type="Gene3D" id="3.40.50.1980">
    <property type="entry name" value="Nitrogenase molybdenum iron protein domain"/>
    <property type="match status" value="2"/>
</dbReference>
<dbReference type="HAMAP" id="MF_01024">
    <property type="entry name" value="HisD"/>
    <property type="match status" value="1"/>
</dbReference>
<dbReference type="InterPro" id="IPR016161">
    <property type="entry name" value="Ald_DH/histidinol_DH"/>
</dbReference>
<dbReference type="InterPro" id="IPR001692">
    <property type="entry name" value="Histidinol_DH_CS"/>
</dbReference>
<dbReference type="InterPro" id="IPR022695">
    <property type="entry name" value="Histidinol_DH_monofunct"/>
</dbReference>
<dbReference type="InterPro" id="IPR012131">
    <property type="entry name" value="Hstdl_DH"/>
</dbReference>
<dbReference type="NCBIfam" id="TIGR00069">
    <property type="entry name" value="hisD"/>
    <property type="match status" value="1"/>
</dbReference>
<dbReference type="PANTHER" id="PTHR21256:SF2">
    <property type="entry name" value="HISTIDINE BIOSYNTHESIS TRIFUNCTIONAL PROTEIN"/>
    <property type="match status" value="1"/>
</dbReference>
<dbReference type="PANTHER" id="PTHR21256">
    <property type="entry name" value="HISTIDINOL DEHYDROGENASE HDH"/>
    <property type="match status" value="1"/>
</dbReference>
<dbReference type="Pfam" id="PF00815">
    <property type="entry name" value="Histidinol_dh"/>
    <property type="match status" value="1"/>
</dbReference>
<dbReference type="PIRSF" id="PIRSF000099">
    <property type="entry name" value="Histidinol_dh"/>
    <property type="match status" value="1"/>
</dbReference>
<dbReference type="PRINTS" id="PR00083">
    <property type="entry name" value="HOLDHDRGNASE"/>
</dbReference>
<dbReference type="SUPFAM" id="SSF53720">
    <property type="entry name" value="ALDH-like"/>
    <property type="match status" value="1"/>
</dbReference>
<dbReference type="PROSITE" id="PS00611">
    <property type="entry name" value="HISOL_DEHYDROGENASE"/>
    <property type="match status" value="1"/>
</dbReference>
<feature type="chain" id="PRO_0000135743" description="Histidinol dehydrogenase">
    <location>
        <begin position="1"/>
        <end position="435"/>
    </location>
</feature>
<feature type="active site" description="Proton acceptor" evidence="1">
    <location>
        <position position="327"/>
    </location>
</feature>
<feature type="active site" description="Proton acceptor" evidence="1">
    <location>
        <position position="328"/>
    </location>
</feature>
<feature type="binding site" evidence="1">
    <location>
        <position position="131"/>
    </location>
    <ligand>
        <name>NAD(+)</name>
        <dbReference type="ChEBI" id="CHEBI:57540"/>
    </ligand>
</feature>
<feature type="binding site" evidence="1">
    <location>
        <position position="189"/>
    </location>
    <ligand>
        <name>NAD(+)</name>
        <dbReference type="ChEBI" id="CHEBI:57540"/>
    </ligand>
</feature>
<feature type="binding site" evidence="1">
    <location>
        <position position="212"/>
    </location>
    <ligand>
        <name>NAD(+)</name>
        <dbReference type="ChEBI" id="CHEBI:57540"/>
    </ligand>
</feature>
<feature type="binding site" evidence="1">
    <location>
        <position position="238"/>
    </location>
    <ligand>
        <name>substrate</name>
    </ligand>
</feature>
<feature type="binding site" evidence="1">
    <location>
        <position position="260"/>
    </location>
    <ligand>
        <name>substrate</name>
    </ligand>
</feature>
<feature type="binding site" evidence="1">
    <location>
        <position position="260"/>
    </location>
    <ligand>
        <name>Zn(2+)</name>
        <dbReference type="ChEBI" id="CHEBI:29105"/>
    </ligand>
</feature>
<feature type="binding site" evidence="1">
    <location>
        <position position="263"/>
    </location>
    <ligand>
        <name>substrate</name>
    </ligand>
</feature>
<feature type="binding site" evidence="1">
    <location>
        <position position="263"/>
    </location>
    <ligand>
        <name>Zn(2+)</name>
        <dbReference type="ChEBI" id="CHEBI:29105"/>
    </ligand>
</feature>
<feature type="binding site" evidence="1">
    <location>
        <position position="328"/>
    </location>
    <ligand>
        <name>substrate</name>
    </ligand>
</feature>
<feature type="binding site" evidence="1">
    <location>
        <position position="361"/>
    </location>
    <ligand>
        <name>substrate</name>
    </ligand>
</feature>
<feature type="binding site" evidence="1">
    <location>
        <position position="361"/>
    </location>
    <ligand>
        <name>Zn(2+)</name>
        <dbReference type="ChEBI" id="CHEBI:29105"/>
    </ligand>
</feature>
<feature type="binding site" evidence="1">
    <location>
        <position position="415"/>
    </location>
    <ligand>
        <name>substrate</name>
    </ligand>
</feature>
<feature type="binding site" evidence="1">
    <location>
        <position position="420"/>
    </location>
    <ligand>
        <name>substrate</name>
    </ligand>
</feature>
<feature type="binding site" evidence="1">
    <location>
        <position position="420"/>
    </location>
    <ligand>
        <name>Zn(2+)</name>
        <dbReference type="ChEBI" id="CHEBI:29105"/>
    </ligand>
</feature>
<proteinExistence type="inferred from homology"/>
<reference key="1">
    <citation type="journal article" date="2003" name="Proc. Natl. Acad. Sci. U.S.A.">
        <title>Reductive genome evolution in Buchnera aphidicola.</title>
        <authorList>
            <person name="van Ham R.C.H.J."/>
            <person name="Kamerbeek J."/>
            <person name="Palacios C."/>
            <person name="Rausell C."/>
            <person name="Abascal F."/>
            <person name="Bastolla U."/>
            <person name="Fernandez J.M."/>
            <person name="Jimenez L."/>
            <person name="Postigo M."/>
            <person name="Silva F.J."/>
            <person name="Tamames J."/>
            <person name="Viguera E."/>
            <person name="Latorre A."/>
            <person name="Valencia A."/>
            <person name="Moran F."/>
            <person name="Moya A."/>
        </authorList>
    </citation>
    <scope>NUCLEOTIDE SEQUENCE [LARGE SCALE GENOMIC DNA]</scope>
    <source>
        <strain>Bp</strain>
    </source>
</reference>
<comment type="function">
    <text evidence="1">Catalyzes the sequential NAD-dependent oxidations of L-histidinol to L-histidinaldehyde and then to L-histidine.</text>
</comment>
<comment type="catalytic activity">
    <reaction evidence="1">
        <text>L-histidinol + 2 NAD(+) + H2O = L-histidine + 2 NADH + 3 H(+)</text>
        <dbReference type="Rhea" id="RHEA:20641"/>
        <dbReference type="ChEBI" id="CHEBI:15377"/>
        <dbReference type="ChEBI" id="CHEBI:15378"/>
        <dbReference type="ChEBI" id="CHEBI:57540"/>
        <dbReference type="ChEBI" id="CHEBI:57595"/>
        <dbReference type="ChEBI" id="CHEBI:57699"/>
        <dbReference type="ChEBI" id="CHEBI:57945"/>
        <dbReference type="EC" id="1.1.1.23"/>
    </reaction>
</comment>
<comment type="cofactor">
    <cofactor evidence="1">
        <name>Zn(2+)</name>
        <dbReference type="ChEBI" id="CHEBI:29105"/>
    </cofactor>
    <text evidence="1">Binds 1 zinc ion per subunit.</text>
</comment>
<comment type="pathway">
    <text evidence="1">Amino-acid biosynthesis; L-histidine biosynthesis; L-histidine from 5-phospho-alpha-D-ribose 1-diphosphate: step 9/9.</text>
</comment>
<comment type="subunit">
    <text evidence="1">Homodimer.</text>
</comment>
<comment type="similarity">
    <text evidence="1">Belongs to the histidinol dehydrogenase family.</text>
</comment>
<accession>P59398</accession>
<protein>
    <recommendedName>
        <fullName evidence="1">Histidinol dehydrogenase</fullName>
        <shortName evidence="1">HDH</shortName>
        <ecNumber evidence="1">1.1.1.23</ecNumber>
    </recommendedName>
</protein>
<organism>
    <name type="scientific">Buchnera aphidicola subsp. Baizongia pistaciae (strain Bp)</name>
    <dbReference type="NCBI Taxonomy" id="224915"/>
    <lineage>
        <taxon>Bacteria</taxon>
        <taxon>Pseudomonadati</taxon>
        <taxon>Pseudomonadota</taxon>
        <taxon>Gammaproteobacteria</taxon>
        <taxon>Enterobacterales</taxon>
        <taxon>Erwiniaceae</taxon>
        <taxon>Buchnera</taxon>
    </lineage>
</organism>
<sequence length="435" mass="48185">MEVYIPIIYWKSCSEKEKREILFRPVVNDNSQIKEVVKEIITNVKNSGDKALYDYTKTFDKIRLESIQVSYGEIVDSDSFVNEEIQKSISVAKNNIKIFHEKQTHNVVNIEIQPGVFCRQIIRPIQSVGLYIPGGCAPLVSTVLMLAIPAKIVGCKNIILCSPPPITKEILYASKICGIHNIFQVGGAQAIAAMAFGTKTIPKVNKIFGPGNVYVTEAKLQINALLNDLSIDMLAGPSEILIIADFKANACIIASDFLSQMEHGIYSQAILVTPSYDLACNVIFEINIQLKNLSRKKVINKSLKYSRIIVTKTLLECFEISNLYAPEHLIIQCENSNRLLVYVINAGSIFLGRWSAVASGDYVTGTNHVLPTYGSAIVNSGLTVMDFQKIISVQKLDQQGLIDVSSSIISLSEVERMDAHTNSIKQRLIALQDVK</sequence>
<name>HISX_BUCBP</name>
<keyword id="KW-0028">Amino-acid biosynthesis</keyword>
<keyword id="KW-0368">Histidine biosynthesis</keyword>
<keyword id="KW-0479">Metal-binding</keyword>
<keyword id="KW-0520">NAD</keyword>
<keyword id="KW-0560">Oxidoreductase</keyword>
<keyword id="KW-1185">Reference proteome</keyword>
<keyword id="KW-0862">Zinc</keyword>
<evidence type="ECO:0000255" key="1">
    <source>
        <dbReference type="HAMAP-Rule" id="MF_01024"/>
    </source>
</evidence>